<dbReference type="EC" id="7.1.1.-" evidence="1"/>
<dbReference type="EMBL" id="CP001191">
    <property type="protein sequence ID" value="ACI54562.1"/>
    <property type="molecule type" value="Genomic_DNA"/>
</dbReference>
<dbReference type="RefSeq" id="WP_003587271.1">
    <property type="nucleotide sequence ID" value="NC_011369.1"/>
</dbReference>
<dbReference type="SMR" id="B5ZYM1"/>
<dbReference type="STRING" id="395492.Rleg2_1268"/>
<dbReference type="KEGG" id="rlt:Rleg2_1268"/>
<dbReference type="eggNOG" id="COG1005">
    <property type="taxonomic scope" value="Bacteria"/>
</dbReference>
<dbReference type="HOGENOM" id="CLU_015134_0_1_5"/>
<dbReference type="Proteomes" id="UP000008330">
    <property type="component" value="Chromosome"/>
</dbReference>
<dbReference type="GO" id="GO:0005886">
    <property type="term" value="C:plasma membrane"/>
    <property type="evidence" value="ECO:0007669"/>
    <property type="project" value="UniProtKB-SubCell"/>
</dbReference>
<dbReference type="GO" id="GO:0003954">
    <property type="term" value="F:NADH dehydrogenase activity"/>
    <property type="evidence" value="ECO:0007669"/>
    <property type="project" value="TreeGrafter"/>
</dbReference>
<dbReference type="GO" id="GO:0016655">
    <property type="term" value="F:oxidoreductase activity, acting on NAD(P)H, quinone or similar compound as acceptor"/>
    <property type="evidence" value="ECO:0007669"/>
    <property type="project" value="UniProtKB-UniRule"/>
</dbReference>
<dbReference type="GO" id="GO:0048038">
    <property type="term" value="F:quinone binding"/>
    <property type="evidence" value="ECO:0007669"/>
    <property type="project" value="UniProtKB-KW"/>
</dbReference>
<dbReference type="GO" id="GO:0009060">
    <property type="term" value="P:aerobic respiration"/>
    <property type="evidence" value="ECO:0007669"/>
    <property type="project" value="TreeGrafter"/>
</dbReference>
<dbReference type="HAMAP" id="MF_01350">
    <property type="entry name" value="NDH1_NuoH"/>
    <property type="match status" value="1"/>
</dbReference>
<dbReference type="InterPro" id="IPR001694">
    <property type="entry name" value="NADH_UbQ_OxRdtase_su1/FPO"/>
</dbReference>
<dbReference type="InterPro" id="IPR018086">
    <property type="entry name" value="NADH_UbQ_OxRdtase_su1_CS"/>
</dbReference>
<dbReference type="NCBIfam" id="NF004741">
    <property type="entry name" value="PRK06076.1-2"/>
    <property type="match status" value="1"/>
</dbReference>
<dbReference type="NCBIfam" id="NF004745">
    <property type="entry name" value="PRK06076.1-6"/>
    <property type="match status" value="1"/>
</dbReference>
<dbReference type="PANTHER" id="PTHR11432">
    <property type="entry name" value="NADH DEHYDROGENASE SUBUNIT 1"/>
    <property type="match status" value="1"/>
</dbReference>
<dbReference type="PANTHER" id="PTHR11432:SF3">
    <property type="entry name" value="NADH-UBIQUINONE OXIDOREDUCTASE CHAIN 1"/>
    <property type="match status" value="1"/>
</dbReference>
<dbReference type="Pfam" id="PF00146">
    <property type="entry name" value="NADHdh"/>
    <property type="match status" value="1"/>
</dbReference>
<dbReference type="PROSITE" id="PS00668">
    <property type="entry name" value="COMPLEX1_ND1_2"/>
    <property type="match status" value="1"/>
</dbReference>
<feature type="chain" id="PRO_1000143615" description="NADH-quinone oxidoreductase subunit H">
    <location>
        <begin position="1"/>
        <end position="347"/>
    </location>
</feature>
<feature type="transmembrane region" description="Helical" evidence="1">
    <location>
        <begin position="13"/>
        <end position="33"/>
    </location>
</feature>
<feature type="transmembrane region" description="Helical" evidence="1">
    <location>
        <begin position="50"/>
        <end position="70"/>
    </location>
</feature>
<feature type="transmembrane region" description="Helical" evidence="1">
    <location>
        <begin position="82"/>
        <end position="102"/>
    </location>
</feature>
<feature type="transmembrane region" description="Helical" evidence="1">
    <location>
        <begin position="115"/>
        <end position="135"/>
    </location>
</feature>
<feature type="transmembrane region" description="Helical" evidence="1">
    <location>
        <begin position="161"/>
        <end position="181"/>
    </location>
</feature>
<feature type="transmembrane region" description="Helical" evidence="1">
    <location>
        <begin position="198"/>
        <end position="218"/>
    </location>
</feature>
<feature type="transmembrane region" description="Helical" evidence="1">
    <location>
        <begin position="263"/>
        <end position="283"/>
    </location>
</feature>
<feature type="transmembrane region" description="Helical" evidence="1">
    <location>
        <begin position="286"/>
        <end position="306"/>
    </location>
</feature>
<feature type="transmembrane region" description="Helical" evidence="1">
    <location>
        <begin position="321"/>
        <end position="341"/>
    </location>
</feature>
<name>NUOH_RHILW</name>
<sequence>MDSFFSTYVLPAIIMIGQSLLLLVCLLVFIAYVLLADRKIWAAVQLRRGPNVVGPFGLFQSFADLLKFVFKEPIIPAGANKAVFLLAPLVTVLLALSTWAVVPLADGWVIANINVGILYIFAISSLEVYGIIMGGWASNSKYPFLGALRSAAQMVSYEVSIGFVIVTVLLCVGSLNLTDIVNAQHTGLGTMLGLPASFLDWHWLSLFPMFIIFFISALAETNRPPFDLPEAESELVAGFMVEYGSSPYMMFMLGEYAAVCLMCSLTTILFLGGWLPPVDIWILNWVPGIIWFMLKACFVFFMFAMVKAFVPRYRYDQLMRLGWKVFLPLSLAMVIIVAFVLKLMGWA</sequence>
<comment type="function">
    <text evidence="1">NDH-1 shuttles electrons from NADH, via FMN and iron-sulfur (Fe-S) centers, to quinones in the respiratory chain. The immediate electron acceptor for the enzyme in this species is believed to be ubiquinone. Couples the redox reaction to proton translocation (for every two electrons transferred, four hydrogen ions are translocated across the cytoplasmic membrane), and thus conserves the redox energy in a proton gradient. This subunit may bind ubiquinone.</text>
</comment>
<comment type="catalytic activity">
    <reaction evidence="1">
        <text>a quinone + NADH + 5 H(+)(in) = a quinol + NAD(+) + 4 H(+)(out)</text>
        <dbReference type="Rhea" id="RHEA:57888"/>
        <dbReference type="ChEBI" id="CHEBI:15378"/>
        <dbReference type="ChEBI" id="CHEBI:24646"/>
        <dbReference type="ChEBI" id="CHEBI:57540"/>
        <dbReference type="ChEBI" id="CHEBI:57945"/>
        <dbReference type="ChEBI" id="CHEBI:132124"/>
    </reaction>
</comment>
<comment type="subunit">
    <text evidence="1">NDH-1 is composed of 14 different subunits. Subunits NuoA, H, J, K, L, M, N constitute the membrane sector of the complex.</text>
</comment>
<comment type="subcellular location">
    <subcellularLocation>
        <location evidence="1">Cell inner membrane</location>
        <topology evidence="1">Multi-pass membrane protein</topology>
    </subcellularLocation>
</comment>
<comment type="similarity">
    <text evidence="1">Belongs to the complex I subunit 1 family.</text>
</comment>
<proteinExistence type="inferred from homology"/>
<reference key="1">
    <citation type="journal article" date="2010" name="Stand. Genomic Sci.">
        <title>Complete genome sequence of Rhizobium leguminosarum bv trifolii strain WSM2304, an effective microsymbiont of the South American clover Trifolium polymorphum.</title>
        <authorList>
            <person name="Reeve W."/>
            <person name="O'Hara G."/>
            <person name="Chain P."/>
            <person name="Ardley J."/>
            <person name="Brau L."/>
            <person name="Nandesena K."/>
            <person name="Tiwari R."/>
            <person name="Malfatti S."/>
            <person name="Kiss H."/>
            <person name="Lapidus A."/>
            <person name="Copeland A."/>
            <person name="Nolan M."/>
            <person name="Land M."/>
            <person name="Ivanova N."/>
            <person name="Mavromatis K."/>
            <person name="Markowitz V."/>
            <person name="Kyrpides N."/>
            <person name="Melino V."/>
            <person name="Denton M."/>
            <person name="Yates R."/>
            <person name="Howieson J."/>
        </authorList>
    </citation>
    <scope>NUCLEOTIDE SEQUENCE [LARGE SCALE GENOMIC DNA]</scope>
    <source>
        <strain>WSM2304</strain>
    </source>
</reference>
<evidence type="ECO:0000255" key="1">
    <source>
        <dbReference type="HAMAP-Rule" id="MF_01350"/>
    </source>
</evidence>
<protein>
    <recommendedName>
        <fullName evidence="1">NADH-quinone oxidoreductase subunit H</fullName>
        <ecNumber evidence="1">7.1.1.-</ecNumber>
    </recommendedName>
    <alternativeName>
        <fullName evidence="1">NADH dehydrogenase I subunit H</fullName>
    </alternativeName>
    <alternativeName>
        <fullName evidence="1">NDH-1 subunit H</fullName>
    </alternativeName>
</protein>
<accession>B5ZYM1</accession>
<keyword id="KW-0997">Cell inner membrane</keyword>
<keyword id="KW-1003">Cell membrane</keyword>
<keyword id="KW-0472">Membrane</keyword>
<keyword id="KW-0520">NAD</keyword>
<keyword id="KW-0874">Quinone</keyword>
<keyword id="KW-1185">Reference proteome</keyword>
<keyword id="KW-1278">Translocase</keyword>
<keyword id="KW-0812">Transmembrane</keyword>
<keyword id="KW-1133">Transmembrane helix</keyword>
<keyword id="KW-0830">Ubiquinone</keyword>
<gene>
    <name evidence="1" type="primary">nuoH</name>
    <name type="ordered locus">Rleg2_1268</name>
</gene>
<organism>
    <name type="scientific">Rhizobium leguminosarum bv. trifolii (strain WSM2304)</name>
    <dbReference type="NCBI Taxonomy" id="395492"/>
    <lineage>
        <taxon>Bacteria</taxon>
        <taxon>Pseudomonadati</taxon>
        <taxon>Pseudomonadota</taxon>
        <taxon>Alphaproteobacteria</taxon>
        <taxon>Hyphomicrobiales</taxon>
        <taxon>Rhizobiaceae</taxon>
        <taxon>Rhizobium/Agrobacterium group</taxon>
        <taxon>Rhizobium</taxon>
    </lineage>
</organism>